<sequence>MPRGGSPTPRTIPADPIYGSTLVAKLINKIMIGGKKSKAEKIVYEALRIASEQLNEDPIAVLTKAIENTKPLVETRSRRIGGAVYQIPVEVPERRALALALRWIVNGARDRGAGEMEKKLAAELVDAYKGQGYAAKRREEIHRMAEANKAFAHLRW</sequence>
<proteinExistence type="inferred from homology"/>
<keyword id="KW-1185">Reference proteome</keyword>
<keyword id="KW-0687">Ribonucleoprotein</keyword>
<keyword id="KW-0689">Ribosomal protein</keyword>
<keyword id="KW-0694">RNA-binding</keyword>
<keyword id="KW-0699">rRNA-binding</keyword>
<keyword id="KW-0820">tRNA-binding</keyword>
<feature type="chain" id="PRO_1000125922" description="Small ribosomal subunit protein uS7">
    <location>
        <begin position="1"/>
        <end position="156"/>
    </location>
</feature>
<evidence type="ECO:0000255" key="1">
    <source>
        <dbReference type="HAMAP-Rule" id="MF_00480"/>
    </source>
</evidence>
<evidence type="ECO:0000305" key="2"/>
<gene>
    <name evidence="1" type="primary">rpsG</name>
    <name type="ordered locus">COPRO5265_1016</name>
</gene>
<reference key="1">
    <citation type="submission" date="2008-08" db="EMBL/GenBank/DDBJ databases">
        <title>The complete genome sequence of Coprothermobacter proteolyticus strain ATCC 5245 / DSM 5265 / BT.</title>
        <authorList>
            <person name="Dodson R.J."/>
            <person name="Durkin A.S."/>
            <person name="Wu M."/>
            <person name="Eisen J."/>
            <person name="Sutton G."/>
        </authorList>
    </citation>
    <scope>NUCLEOTIDE SEQUENCE [LARGE SCALE GENOMIC DNA]</scope>
    <source>
        <strain>ATCC 35245 / DSM 5265 / OCM 4 / BT</strain>
    </source>
</reference>
<protein>
    <recommendedName>
        <fullName evidence="1">Small ribosomal subunit protein uS7</fullName>
    </recommendedName>
    <alternativeName>
        <fullName evidence="2">30S ribosomal protein S7</fullName>
    </alternativeName>
</protein>
<organism>
    <name type="scientific">Coprothermobacter proteolyticus (strain ATCC 35245 / DSM 5265 / OCM 4 / BT)</name>
    <dbReference type="NCBI Taxonomy" id="309798"/>
    <lineage>
        <taxon>Bacteria</taxon>
        <taxon>Pseudomonadati</taxon>
        <taxon>Coprothermobacterota</taxon>
        <taxon>Coprothermobacteria</taxon>
        <taxon>Coprothermobacterales</taxon>
        <taxon>Coprothermobacteraceae</taxon>
        <taxon>Coprothermobacter</taxon>
    </lineage>
</organism>
<accession>B5Y991</accession>
<dbReference type="EMBL" id="CP001145">
    <property type="protein sequence ID" value="ACI17416.1"/>
    <property type="molecule type" value="Genomic_DNA"/>
</dbReference>
<dbReference type="RefSeq" id="WP_012544068.1">
    <property type="nucleotide sequence ID" value="NC_011295.1"/>
</dbReference>
<dbReference type="SMR" id="B5Y991"/>
<dbReference type="STRING" id="309798.COPRO5265_1016"/>
<dbReference type="KEGG" id="cpo:COPRO5265_1016"/>
<dbReference type="eggNOG" id="COG0049">
    <property type="taxonomic scope" value="Bacteria"/>
</dbReference>
<dbReference type="HOGENOM" id="CLU_072226_1_1_9"/>
<dbReference type="OrthoDB" id="9807653at2"/>
<dbReference type="Proteomes" id="UP000001732">
    <property type="component" value="Chromosome"/>
</dbReference>
<dbReference type="GO" id="GO:0015935">
    <property type="term" value="C:small ribosomal subunit"/>
    <property type="evidence" value="ECO:0007669"/>
    <property type="project" value="InterPro"/>
</dbReference>
<dbReference type="GO" id="GO:0019843">
    <property type="term" value="F:rRNA binding"/>
    <property type="evidence" value="ECO:0007669"/>
    <property type="project" value="UniProtKB-UniRule"/>
</dbReference>
<dbReference type="GO" id="GO:0003735">
    <property type="term" value="F:structural constituent of ribosome"/>
    <property type="evidence" value="ECO:0007669"/>
    <property type="project" value="InterPro"/>
</dbReference>
<dbReference type="GO" id="GO:0000049">
    <property type="term" value="F:tRNA binding"/>
    <property type="evidence" value="ECO:0007669"/>
    <property type="project" value="UniProtKB-UniRule"/>
</dbReference>
<dbReference type="GO" id="GO:0006412">
    <property type="term" value="P:translation"/>
    <property type="evidence" value="ECO:0007669"/>
    <property type="project" value="UniProtKB-UniRule"/>
</dbReference>
<dbReference type="CDD" id="cd14869">
    <property type="entry name" value="uS7_Bacteria"/>
    <property type="match status" value="1"/>
</dbReference>
<dbReference type="FunFam" id="1.10.455.10:FF:000001">
    <property type="entry name" value="30S ribosomal protein S7"/>
    <property type="match status" value="1"/>
</dbReference>
<dbReference type="Gene3D" id="1.10.455.10">
    <property type="entry name" value="Ribosomal protein S7 domain"/>
    <property type="match status" value="1"/>
</dbReference>
<dbReference type="HAMAP" id="MF_00480_B">
    <property type="entry name" value="Ribosomal_uS7_B"/>
    <property type="match status" value="1"/>
</dbReference>
<dbReference type="InterPro" id="IPR000235">
    <property type="entry name" value="Ribosomal_uS7"/>
</dbReference>
<dbReference type="InterPro" id="IPR005717">
    <property type="entry name" value="Ribosomal_uS7_bac/org-type"/>
</dbReference>
<dbReference type="InterPro" id="IPR020606">
    <property type="entry name" value="Ribosomal_uS7_CS"/>
</dbReference>
<dbReference type="InterPro" id="IPR023798">
    <property type="entry name" value="Ribosomal_uS7_dom"/>
</dbReference>
<dbReference type="InterPro" id="IPR036823">
    <property type="entry name" value="Ribosomal_uS7_dom_sf"/>
</dbReference>
<dbReference type="NCBIfam" id="TIGR01029">
    <property type="entry name" value="rpsG_bact"/>
    <property type="match status" value="1"/>
</dbReference>
<dbReference type="PANTHER" id="PTHR11205">
    <property type="entry name" value="RIBOSOMAL PROTEIN S7"/>
    <property type="match status" value="1"/>
</dbReference>
<dbReference type="Pfam" id="PF00177">
    <property type="entry name" value="Ribosomal_S7"/>
    <property type="match status" value="1"/>
</dbReference>
<dbReference type="PIRSF" id="PIRSF002122">
    <property type="entry name" value="RPS7p_RPS7a_RPS5e_RPS7o"/>
    <property type="match status" value="1"/>
</dbReference>
<dbReference type="SUPFAM" id="SSF47973">
    <property type="entry name" value="Ribosomal protein S7"/>
    <property type="match status" value="1"/>
</dbReference>
<dbReference type="PROSITE" id="PS00052">
    <property type="entry name" value="RIBOSOMAL_S7"/>
    <property type="match status" value="1"/>
</dbReference>
<comment type="function">
    <text evidence="1">One of the primary rRNA binding proteins, it binds directly to 16S rRNA where it nucleates assembly of the head domain of the 30S subunit. Is located at the subunit interface close to the decoding center, probably blocks exit of the E-site tRNA.</text>
</comment>
<comment type="subunit">
    <text evidence="1">Part of the 30S ribosomal subunit. Contacts proteins S9 and S11.</text>
</comment>
<comment type="similarity">
    <text evidence="1">Belongs to the universal ribosomal protein uS7 family.</text>
</comment>
<name>RS7_COPPD</name>